<feature type="chain" id="PRO_1000060296" description="Phosphoenolpyruvate carboxykinase [GTP]">
    <location>
        <begin position="1"/>
        <end position="606"/>
    </location>
</feature>
<feature type="active site" evidence="1 2">
    <location>
        <position position="273"/>
    </location>
</feature>
<feature type="binding site" evidence="2 3">
    <location>
        <position position="81"/>
    </location>
    <ligand>
        <name>substrate</name>
    </ligand>
</feature>
<feature type="binding site" evidence="1 2">
    <location>
        <begin position="220"/>
        <end position="222"/>
    </location>
    <ligand>
        <name>substrate</name>
    </ligand>
</feature>
<feature type="binding site" evidence="2 3">
    <location>
        <position position="229"/>
    </location>
    <ligand>
        <name>Mn(2+)</name>
        <dbReference type="ChEBI" id="CHEBI:29035"/>
    </ligand>
</feature>
<feature type="binding site" evidence="2 3">
    <location>
        <position position="249"/>
    </location>
    <ligand>
        <name>Mn(2+)</name>
        <dbReference type="ChEBI" id="CHEBI:29035"/>
    </ligand>
</feature>
<feature type="binding site" evidence="1 2">
    <location>
        <position position="271"/>
    </location>
    <ligand>
        <name>substrate</name>
    </ligand>
</feature>
<feature type="binding site" evidence="1 2">
    <location>
        <begin position="272"/>
        <end position="277"/>
    </location>
    <ligand>
        <name>GTP</name>
        <dbReference type="ChEBI" id="CHEBI:37565"/>
    </ligand>
</feature>
<feature type="binding site" evidence="2 3">
    <location>
        <position position="296"/>
    </location>
    <ligand>
        <name>Mn(2+)</name>
        <dbReference type="ChEBI" id="CHEBI:29035"/>
    </ligand>
</feature>
<feature type="binding site" evidence="2 3">
    <location>
        <begin position="387"/>
        <end position="389"/>
    </location>
    <ligand>
        <name>substrate</name>
    </ligand>
</feature>
<feature type="binding site" evidence="1 2">
    <location>
        <position position="389"/>
    </location>
    <ligand>
        <name>GTP</name>
        <dbReference type="ChEBI" id="CHEBI:37565"/>
    </ligand>
</feature>
<feature type="binding site" evidence="1 2">
    <location>
        <position position="420"/>
    </location>
    <ligand>
        <name>GTP</name>
        <dbReference type="ChEBI" id="CHEBI:37565"/>
    </ligand>
</feature>
<feature type="binding site" evidence="1 2">
    <location>
        <begin position="515"/>
        <end position="518"/>
    </location>
    <ligand>
        <name>GTP</name>
        <dbReference type="ChEBI" id="CHEBI:37565"/>
    </ligand>
</feature>
<feature type="helix" evidence="7">
    <location>
        <begin position="3"/>
        <end position="5"/>
    </location>
</feature>
<feature type="turn" evidence="7">
    <location>
        <begin position="7"/>
        <end position="11"/>
    </location>
</feature>
<feature type="helix" evidence="7">
    <location>
        <begin position="17"/>
        <end position="30"/>
    </location>
</feature>
<feature type="strand" evidence="7">
    <location>
        <begin position="33"/>
        <end position="37"/>
    </location>
</feature>
<feature type="helix" evidence="7">
    <location>
        <begin position="42"/>
        <end position="54"/>
    </location>
</feature>
<feature type="strand" evidence="5">
    <location>
        <begin position="57"/>
        <end position="60"/>
    </location>
</feature>
<feature type="turn" evidence="7">
    <location>
        <begin position="63"/>
        <end position="65"/>
    </location>
</feature>
<feature type="strand" evidence="9">
    <location>
        <begin position="66"/>
        <end position="68"/>
    </location>
</feature>
<feature type="strand" evidence="7">
    <location>
        <begin position="70"/>
        <end position="72"/>
    </location>
</feature>
<feature type="helix" evidence="5">
    <location>
        <begin position="76"/>
        <end position="78"/>
    </location>
</feature>
<feature type="helix" evidence="7">
    <location>
        <begin position="83"/>
        <end position="85"/>
    </location>
</feature>
<feature type="strand" evidence="7">
    <location>
        <begin position="86"/>
        <end position="88"/>
    </location>
</feature>
<feature type="helix" evidence="7">
    <location>
        <begin position="93"/>
        <end position="95"/>
    </location>
</feature>
<feature type="helix" evidence="7">
    <location>
        <begin position="105"/>
        <end position="116"/>
    </location>
</feature>
<feature type="turn" evidence="7">
    <location>
        <begin position="117"/>
        <end position="122"/>
    </location>
</feature>
<feature type="strand" evidence="7">
    <location>
        <begin position="123"/>
        <end position="133"/>
    </location>
</feature>
<feature type="strand" evidence="8">
    <location>
        <begin position="137"/>
        <end position="139"/>
    </location>
</feature>
<feature type="strand" evidence="7">
    <location>
        <begin position="141"/>
        <end position="148"/>
    </location>
</feature>
<feature type="helix" evidence="7">
    <location>
        <begin position="150"/>
        <end position="159"/>
    </location>
</feature>
<feature type="strand" evidence="7">
    <location>
        <begin position="160"/>
        <end position="163"/>
    </location>
</feature>
<feature type="helix" evidence="7">
    <location>
        <begin position="164"/>
        <end position="169"/>
    </location>
</feature>
<feature type="turn" evidence="7">
    <location>
        <begin position="170"/>
        <end position="173"/>
    </location>
</feature>
<feature type="strand" evidence="7">
    <location>
        <begin position="177"/>
        <end position="182"/>
    </location>
</feature>
<feature type="strand" evidence="7">
    <location>
        <begin position="203"/>
        <end position="207"/>
    </location>
</feature>
<feature type="turn" evidence="7">
    <location>
        <begin position="208"/>
        <end position="211"/>
    </location>
</feature>
<feature type="strand" evidence="7">
    <location>
        <begin position="212"/>
        <end position="217"/>
    </location>
</feature>
<feature type="helix" evidence="7">
    <location>
        <begin position="221"/>
        <end position="224"/>
    </location>
</feature>
<feature type="turn" evidence="7">
    <location>
        <begin position="226"/>
        <end position="228"/>
    </location>
</feature>
<feature type="helix" evidence="7">
    <location>
        <begin position="229"/>
        <end position="232"/>
    </location>
</feature>
<feature type="helix" evidence="7">
    <location>
        <begin position="234"/>
        <end position="243"/>
    </location>
</feature>
<feature type="strand" evidence="7">
    <location>
        <begin position="246"/>
        <end position="248"/>
    </location>
</feature>
<feature type="strand" evidence="7">
    <location>
        <begin position="251"/>
        <end position="256"/>
    </location>
</feature>
<feature type="strand" evidence="7">
    <location>
        <begin position="262"/>
        <end position="268"/>
    </location>
</feature>
<feature type="strand" evidence="7">
    <location>
        <begin position="271"/>
        <end position="273"/>
    </location>
</feature>
<feature type="helix" evidence="7">
    <location>
        <begin position="275"/>
        <end position="279"/>
    </location>
</feature>
<feature type="strand" evidence="7">
    <location>
        <begin position="289"/>
        <end position="296"/>
    </location>
</feature>
<feature type="strand" evidence="7">
    <location>
        <begin position="298"/>
        <end position="302"/>
    </location>
</feature>
<feature type="strand" evidence="9">
    <location>
        <begin position="304"/>
        <end position="306"/>
    </location>
</feature>
<feature type="strand" evidence="7">
    <location>
        <begin position="308"/>
        <end position="311"/>
    </location>
</feature>
<feature type="strand" evidence="7">
    <location>
        <begin position="315"/>
        <end position="320"/>
    </location>
</feature>
<feature type="turn" evidence="7">
    <location>
        <begin position="326"/>
        <end position="328"/>
    </location>
</feature>
<feature type="helix" evidence="7">
    <location>
        <begin position="330"/>
        <end position="337"/>
    </location>
</feature>
<feature type="strand" evidence="7">
    <location>
        <begin position="342"/>
        <end position="345"/>
    </location>
</feature>
<feature type="strand" evidence="4">
    <location>
        <begin position="347"/>
        <end position="349"/>
    </location>
</feature>
<feature type="strand" evidence="6">
    <location>
        <begin position="359"/>
        <end position="361"/>
    </location>
</feature>
<feature type="strand" evidence="7">
    <location>
        <begin position="364"/>
        <end position="367"/>
    </location>
</feature>
<feature type="strand" evidence="7">
    <location>
        <begin position="373"/>
        <end position="375"/>
    </location>
</feature>
<feature type="turn" evidence="7">
    <location>
        <begin position="376"/>
        <end position="378"/>
    </location>
</feature>
<feature type="strand" evidence="7">
    <location>
        <begin position="389"/>
        <end position="393"/>
    </location>
</feature>
<feature type="helix" evidence="7">
    <location>
        <begin position="394"/>
        <end position="396"/>
    </location>
</feature>
<feature type="helix" evidence="7">
    <location>
        <begin position="402"/>
        <end position="405"/>
    </location>
</feature>
<feature type="strand" evidence="7">
    <location>
        <begin position="410"/>
        <end position="418"/>
    </location>
</feature>
<feature type="strand" evidence="7">
    <location>
        <begin position="422"/>
        <end position="425"/>
    </location>
</feature>
<feature type="strand" evidence="7">
    <location>
        <begin position="427"/>
        <end position="430"/>
    </location>
</feature>
<feature type="helix" evidence="7">
    <location>
        <begin position="434"/>
        <end position="442"/>
    </location>
</feature>
<feature type="strand" evidence="7">
    <location>
        <begin position="445"/>
        <end position="447"/>
    </location>
</feature>
<feature type="turn" evidence="6">
    <location>
        <begin position="451"/>
        <end position="453"/>
    </location>
</feature>
<feature type="strand" evidence="7">
    <location>
        <begin position="459"/>
        <end position="461"/>
    </location>
</feature>
<feature type="helix" evidence="7">
    <location>
        <begin position="463"/>
        <end position="465"/>
    </location>
</feature>
<feature type="turn" evidence="7">
    <location>
        <begin position="467"/>
        <end position="469"/>
    </location>
</feature>
<feature type="helix" evidence="7">
    <location>
        <begin position="474"/>
        <end position="487"/>
    </location>
</feature>
<feature type="helix" evidence="7">
    <location>
        <begin position="490"/>
        <end position="492"/>
    </location>
</feature>
<feature type="strand" evidence="7">
    <location>
        <begin position="495"/>
        <end position="499"/>
    </location>
</feature>
<feature type="strand" evidence="7">
    <location>
        <begin position="510"/>
        <end position="512"/>
    </location>
</feature>
<feature type="helix" evidence="7">
    <location>
        <begin position="515"/>
        <end position="517"/>
    </location>
</feature>
<feature type="helix" evidence="7">
    <location>
        <begin position="518"/>
        <end position="529"/>
    </location>
</feature>
<feature type="strand" evidence="7">
    <location>
        <begin position="536"/>
        <end position="538"/>
    </location>
</feature>
<feature type="strand" evidence="7">
    <location>
        <begin position="541"/>
        <end position="543"/>
    </location>
</feature>
<feature type="helix" evidence="7">
    <location>
        <begin position="546"/>
        <end position="548"/>
    </location>
</feature>
<feature type="helix" evidence="7">
    <location>
        <begin position="558"/>
        <end position="565"/>
    </location>
</feature>
<feature type="helix" evidence="7">
    <location>
        <begin position="569"/>
        <end position="586"/>
    </location>
</feature>
<feature type="helix" evidence="7">
    <location>
        <begin position="587"/>
        <end position="589"/>
    </location>
</feature>
<feature type="helix" evidence="7">
    <location>
        <begin position="592"/>
        <end position="605"/>
    </location>
</feature>
<protein>
    <recommendedName>
        <fullName evidence="2">Phosphoenolpyruvate carboxykinase [GTP]</fullName>
        <shortName evidence="2">PEP carboxykinase</shortName>
        <shortName evidence="2">PEPCK</shortName>
        <ecNumber evidence="2">4.1.1.32</ecNumber>
    </recommendedName>
    <alternativeName>
        <fullName evidence="2">GTP-dependent phosphoenolpyruvate carboxykinase</fullName>
        <shortName evidence="2">GTP-PEPCK</shortName>
    </alternativeName>
</protein>
<reference key="1">
    <citation type="journal article" date="2008" name="PLoS ONE">
        <title>Genetic basis of virulence attenuation revealed by comparative genomic analysis of Mycobacterium tuberculosis strain H37Ra versus H37Rv.</title>
        <authorList>
            <person name="Zheng H."/>
            <person name="Lu L."/>
            <person name="Wang B."/>
            <person name="Pu S."/>
            <person name="Zhang X."/>
            <person name="Zhu G."/>
            <person name="Shi W."/>
            <person name="Zhang L."/>
            <person name="Wang H."/>
            <person name="Wang S."/>
            <person name="Zhao G."/>
            <person name="Zhang Y."/>
        </authorList>
    </citation>
    <scope>NUCLEOTIDE SEQUENCE [LARGE SCALE GENOMIC DNA]</scope>
    <source>
        <strain>ATCC 25177 / H37Ra</strain>
    </source>
</reference>
<reference key="2">
    <citation type="submission" date="2014-09" db="PDB data bank">
        <title>Crystal Structure of PEPCK (Rv0211) from Mycobacterium tuberculosis in complex with oxalate and Mn2+.</title>
        <authorList>
            <person name="Kim H.L."/>
            <person name="Sacchettini J.C."/>
        </authorList>
    </citation>
    <scope>X-RAY CRYSTALLOGRAPHY (2.02 ANGSTROMS) IN COMPLEX WITH MANGANESE AND SUBSTRATE</scope>
    <scope>COFACTOR</scope>
</reference>
<comment type="function">
    <text evidence="2">Involved in the gluconeogenesis, in growth on fatty acids and is important for initiation of infection in the macrophages. Catalyzes the GTP-dependent conversion of oxaloacetate (OAA) to phosphoenolpyruvate (PEP), the rate-limiting step in the metabolic pathway that produces glucose from lactate and other precursors derived from the citric acid cycle.</text>
</comment>
<comment type="catalytic activity">
    <reaction evidence="2">
        <text>oxaloacetate + GTP = phosphoenolpyruvate + GDP + CO2</text>
        <dbReference type="Rhea" id="RHEA:10388"/>
        <dbReference type="ChEBI" id="CHEBI:16452"/>
        <dbReference type="ChEBI" id="CHEBI:16526"/>
        <dbReference type="ChEBI" id="CHEBI:37565"/>
        <dbReference type="ChEBI" id="CHEBI:58189"/>
        <dbReference type="ChEBI" id="CHEBI:58702"/>
        <dbReference type="EC" id="4.1.1.32"/>
    </reaction>
</comment>
<comment type="cofactor">
    <cofactor evidence="2 3">
        <name>Mn(2+)</name>
        <dbReference type="ChEBI" id="CHEBI:29035"/>
    </cofactor>
    <text evidence="2 3">Binds 1 Mn(2+) ion per subunit.</text>
</comment>
<comment type="pathway">
    <text evidence="2">Carbohydrate biosynthesis; gluconeogenesis.</text>
</comment>
<comment type="subunit">
    <text evidence="2">Monomer.</text>
</comment>
<comment type="subcellular location">
    <subcellularLocation>
        <location evidence="2">Cytoplasm</location>
    </subcellularLocation>
</comment>
<comment type="similarity">
    <text evidence="2">Belongs to the phosphoenolpyruvate carboxykinase [GTP] family.</text>
</comment>
<accession>A5TYT6</accession>
<sequence>MTSATIPGLDTAPTNHQGLLSWVEEVAELTQPDRVVFTDGSEEEFQRLCDQLVEAGTFIRLNPEKHKNSYLALSDPSDVARVESRTYICSAKEIDAGPTNNWMDPGEMRSIMKDLYRGCMRGRTMYVVPFCMGPLGAEDPKLGVEITDSEYVVVSMRTMTRMGKAALEKMGDDGFFVKALHSVGAPLEPGQKDVAWPCSETKYITHFPETREIWSYGSGYGGNALLGKKCYSLRIASAMAHDEGWLAEHMLILKLISPENKAYYFAAAFPSACGKTNLAMLQPTIPGWRAETLGDDIAWMRFGKDGRLYAVNPEFGFFGVAPGTNWKSNPNAMRTIAAGNTVFTNVALTDDGDVWWEGLEGDPQHLIDWKGNDWYFRETETNAAHPNSRYCTPMSQCPILAPEWDDPQGVPISGILFGGRRKTTVPLVTEARDWQHGVFIGATLGSEQTAAAEGKVGNVRRDPMAMLPFLGYNVGDYFQHWINLGKHADESKLPKVFFVNWFRRGDDGRFLWPGFGENSRVLKWIVDRIEHKAGGATTPIGTVPAVEDLDLDGLDVDAADVAAALAVDADEWRQELPLIEEWLQFVGEKLPTGVKDEFDALKERLG</sequence>
<dbReference type="EC" id="4.1.1.32" evidence="2"/>
<dbReference type="EMBL" id="CP000611">
    <property type="protein sequence ID" value="ABQ71936.1"/>
    <property type="molecule type" value="Genomic_DNA"/>
</dbReference>
<dbReference type="RefSeq" id="WP_003401212.1">
    <property type="nucleotide sequence ID" value="NZ_CP016972.1"/>
</dbReference>
<dbReference type="PDB" id="4WIE">
    <property type="method" value="X-ray"/>
    <property type="resolution" value="2.18 A"/>
    <property type="chains" value="A=1-606"/>
</dbReference>
<dbReference type="PDB" id="4WIU">
    <property type="method" value="X-ray"/>
    <property type="resolution" value="2.02 A"/>
    <property type="chains" value="A=1-606"/>
</dbReference>
<dbReference type="PDB" id="4WL8">
    <property type="method" value="X-ray"/>
    <property type="resolution" value="1.61 A"/>
    <property type="chains" value="A=1-606"/>
</dbReference>
<dbReference type="PDB" id="4WOU">
    <property type="method" value="X-ray"/>
    <property type="resolution" value="2.12 A"/>
    <property type="chains" value="A=1-606"/>
</dbReference>
<dbReference type="PDB" id="4WPT">
    <property type="method" value="X-ray"/>
    <property type="resolution" value="1.60 A"/>
    <property type="chains" value="A=1-606"/>
</dbReference>
<dbReference type="PDB" id="4WPU">
    <property type="method" value="X-ray"/>
    <property type="resolution" value="2.26 A"/>
    <property type="chains" value="A=1-606"/>
</dbReference>
<dbReference type="PDB" id="4WPV">
    <property type="method" value="X-ray"/>
    <property type="resolution" value="1.67 A"/>
    <property type="chains" value="A=1-606"/>
</dbReference>
<dbReference type="PDB" id="5I67">
    <property type="method" value="X-ray"/>
    <property type="resolution" value="2.60 A"/>
    <property type="chains" value="A=2-606"/>
</dbReference>
<dbReference type="PDBsum" id="4WIE"/>
<dbReference type="PDBsum" id="4WIU"/>
<dbReference type="PDBsum" id="4WL8"/>
<dbReference type="PDBsum" id="4WOU"/>
<dbReference type="PDBsum" id="4WPT"/>
<dbReference type="PDBsum" id="4WPU"/>
<dbReference type="PDBsum" id="4WPV"/>
<dbReference type="PDBsum" id="5I67"/>
<dbReference type="SMR" id="A5TYT6"/>
<dbReference type="KEGG" id="mra:MRA_0219"/>
<dbReference type="eggNOG" id="COG1274">
    <property type="taxonomic scope" value="Bacteria"/>
</dbReference>
<dbReference type="HOGENOM" id="CLU_028872_1_1_11"/>
<dbReference type="UniPathway" id="UPA00138"/>
<dbReference type="EvolutionaryTrace" id="A5TYT6"/>
<dbReference type="Proteomes" id="UP000001988">
    <property type="component" value="Chromosome"/>
</dbReference>
<dbReference type="GO" id="GO:0005829">
    <property type="term" value="C:cytosol"/>
    <property type="evidence" value="ECO:0007669"/>
    <property type="project" value="TreeGrafter"/>
</dbReference>
<dbReference type="GO" id="GO:0005525">
    <property type="term" value="F:GTP binding"/>
    <property type="evidence" value="ECO:0007669"/>
    <property type="project" value="UniProtKB-UniRule"/>
</dbReference>
<dbReference type="GO" id="GO:0030145">
    <property type="term" value="F:manganese ion binding"/>
    <property type="evidence" value="ECO:0007669"/>
    <property type="project" value="UniProtKB-UniRule"/>
</dbReference>
<dbReference type="GO" id="GO:0004613">
    <property type="term" value="F:phosphoenolpyruvate carboxykinase (GTP) activity"/>
    <property type="evidence" value="ECO:0007669"/>
    <property type="project" value="UniProtKB-UniRule"/>
</dbReference>
<dbReference type="GO" id="GO:0071333">
    <property type="term" value="P:cellular response to glucose stimulus"/>
    <property type="evidence" value="ECO:0007669"/>
    <property type="project" value="TreeGrafter"/>
</dbReference>
<dbReference type="GO" id="GO:0006094">
    <property type="term" value="P:gluconeogenesis"/>
    <property type="evidence" value="ECO:0007669"/>
    <property type="project" value="UniProtKB-UniRule"/>
</dbReference>
<dbReference type="GO" id="GO:0046327">
    <property type="term" value="P:glycerol biosynthetic process from pyruvate"/>
    <property type="evidence" value="ECO:0007669"/>
    <property type="project" value="TreeGrafter"/>
</dbReference>
<dbReference type="GO" id="GO:0006107">
    <property type="term" value="P:oxaloacetate metabolic process"/>
    <property type="evidence" value="ECO:0007669"/>
    <property type="project" value="TreeGrafter"/>
</dbReference>
<dbReference type="GO" id="GO:0019543">
    <property type="term" value="P:propionate catabolic process"/>
    <property type="evidence" value="ECO:0007669"/>
    <property type="project" value="TreeGrafter"/>
</dbReference>
<dbReference type="GO" id="GO:0033993">
    <property type="term" value="P:response to lipid"/>
    <property type="evidence" value="ECO:0007669"/>
    <property type="project" value="TreeGrafter"/>
</dbReference>
<dbReference type="GO" id="GO:0042594">
    <property type="term" value="P:response to starvation"/>
    <property type="evidence" value="ECO:0007669"/>
    <property type="project" value="TreeGrafter"/>
</dbReference>
<dbReference type="CDD" id="cd00819">
    <property type="entry name" value="PEPCK_GTP"/>
    <property type="match status" value="1"/>
</dbReference>
<dbReference type="FunFam" id="3.40.449.10:FF:000005">
    <property type="entry name" value="Phosphoenolpyruvate carboxykinase [GTP]"/>
    <property type="match status" value="1"/>
</dbReference>
<dbReference type="Gene3D" id="3.90.228.20">
    <property type="match status" value="1"/>
</dbReference>
<dbReference type="Gene3D" id="3.40.449.10">
    <property type="entry name" value="Phosphoenolpyruvate Carboxykinase, domain 1"/>
    <property type="match status" value="1"/>
</dbReference>
<dbReference type="Gene3D" id="2.170.8.10">
    <property type="entry name" value="Phosphoenolpyruvate Carboxykinase, domain 2"/>
    <property type="match status" value="1"/>
</dbReference>
<dbReference type="HAMAP" id="MF_00452">
    <property type="entry name" value="PEPCK_GTP"/>
    <property type="match status" value="1"/>
</dbReference>
<dbReference type="InterPro" id="IPR018091">
    <property type="entry name" value="PEP_carboxykin_GTP_CS"/>
</dbReference>
<dbReference type="InterPro" id="IPR013035">
    <property type="entry name" value="PEP_carboxykinase_C"/>
</dbReference>
<dbReference type="InterPro" id="IPR008209">
    <property type="entry name" value="PEP_carboxykinase_GTP"/>
</dbReference>
<dbReference type="InterPro" id="IPR035077">
    <property type="entry name" value="PEP_carboxykinase_GTP_C"/>
</dbReference>
<dbReference type="InterPro" id="IPR035078">
    <property type="entry name" value="PEP_carboxykinase_GTP_N"/>
</dbReference>
<dbReference type="InterPro" id="IPR008210">
    <property type="entry name" value="PEP_carboxykinase_N"/>
</dbReference>
<dbReference type="NCBIfam" id="NF003253">
    <property type="entry name" value="PRK04210.1"/>
    <property type="match status" value="1"/>
</dbReference>
<dbReference type="PANTHER" id="PTHR11561">
    <property type="entry name" value="PHOSPHOENOLPYRUVATE CARBOXYKINASE"/>
    <property type="match status" value="1"/>
</dbReference>
<dbReference type="PANTHER" id="PTHR11561:SF0">
    <property type="entry name" value="PHOSPHOENOLPYRUVATE CARBOXYKINASE [GTP]-RELATED"/>
    <property type="match status" value="1"/>
</dbReference>
<dbReference type="Pfam" id="PF00821">
    <property type="entry name" value="PEPCK_GTP"/>
    <property type="match status" value="1"/>
</dbReference>
<dbReference type="Pfam" id="PF17297">
    <property type="entry name" value="PEPCK_N"/>
    <property type="match status" value="1"/>
</dbReference>
<dbReference type="PIRSF" id="PIRSF001348">
    <property type="entry name" value="PEP_carboxykinase_GTP"/>
    <property type="match status" value="1"/>
</dbReference>
<dbReference type="SUPFAM" id="SSF68923">
    <property type="entry name" value="PEP carboxykinase N-terminal domain"/>
    <property type="match status" value="1"/>
</dbReference>
<dbReference type="SUPFAM" id="SSF53795">
    <property type="entry name" value="PEP carboxykinase-like"/>
    <property type="match status" value="1"/>
</dbReference>
<dbReference type="PROSITE" id="PS00505">
    <property type="entry name" value="PEPCK_GTP"/>
    <property type="match status" value="1"/>
</dbReference>
<evidence type="ECO:0000250" key="1">
    <source>
        <dbReference type="UniProtKB" id="P07379"/>
    </source>
</evidence>
<evidence type="ECO:0000255" key="2">
    <source>
        <dbReference type="HAMAP-Rule" id="MF_00452"/>
    </source>
</evidence>
<evidence type="ECO:0000269" key="3">
    <source ref="2"/>
</evidence>
<evidence type="ECO:0007829" key="4">
    <source>
        <dbReference type="PDB" id="4WIU"/>
    </source>
</evidence>
<evidence type="ECO:0007829" key="5">
    <source>
        <dbReference type="PDB" id="4WL8"/>
    </source>
</evidence>
<evidence type="ECO:0007829" key="6">
    <source>
        <dbReference type="PDB" id="4WOU"/>
    </source>
</evidence>
<evidence type="ECO:0007829" key="7">
    <source>
        <dbReference type="PDB" id="4WPT"/>
    </source>
</evidence>
<evidence type="ECO:0007829" key="8">
    <source>
        <dbReference type="PDB" id="4WPV"/>
    </source>
</evidence>
<evidence type="ECO:0007829" key="9">
    <source>
        <dbReference type="PDB" id="5I67"/>
    </source>
</evidence>
<name>PCKG_MYCTA</name>
<proteinExistence type="evidence at protein level"/>
<keyword id="KW-0002">3D-structure</keyword>
<keyword id="KW-0963">Cytoplasm</keyword>
<keyword id="KW-0210">Decarboxylase</keyword>
<keyword id="KW-0312">Gluconeogenesis</keyword>
<keyword id="KW-0342">GTP-binding</keyword>
<keyword id="KW-0456">Lyase</keyword>
<keyword id="KW-0464">Manganese</keyword>
<keyword id="KW-0479">Metal-binding</keyword>
<keyword id="KW-0547">Nucleotide-binding</keyword>
<keyword id="KW-1185">Reference proteome</keyword>
<gene>
    <name evidence="2" type="primary">pckG</name>
    <name type="ordered locus">MRA_0219</name>
</gene>
<organism>
    <name type="scientific">Mycobacterium tuberculosis (strain ATCC 25177 / H37Ra)</name>
    <dbReference type="NCBI Taxonomy" id="419947"/>
    <lineage>
        <taxon>Bacteria</taxon>
        <taxon>Bacillati</taxon>
        <taxon>Actinomycetota</taxon>
        <taxon>Actinomycetes</taxon>
        <taxon>Mycobacteriales</taxon>
        <taxon>Mycobacteriaceae</taxon>
        <taxon>Mycobacterium</taxon>
        <taxon>Mycobacterium tuberculosis complex</taxon>
    </lineage>
</organism>